<evidence type="ECO:0000255" key="1">
    <source>
        <dbReference type="HAMAP-Rule" id="MF_01014"/>
    </source>
</evidence>
<name>HIS4_RHIR8</name>
<dbReference type="EC" id="5.3.1.16" evidence="1"/>
<dbReference type="EMBL" id="CP000628">
    <property type="protein sequence ID" value="ACM24849.1"/>
    <property type="molecule type" value="Genomic_DNA"/>
</dbReference>
<dbReference type="RefSeq" id="WP_007698549.1">
    <property type="nucleotide sequence ID" value="NC_011985.1"/>
</dbReference>
<dbReference type="SMR" id="B9JG66"/>
<dbReference type="STRING" id="311403.Arad_0056"/>
<dbReference type="GeneID" id="86850452"/>
<dbReference type="KEGG" id="ara:Arad_0056"/>
<dbReference type="eggNOG" id="COG0106">
    <property type="taxonomic scope" value="Bacteria"/>
</dbReference>
<dbReference type="HOGENOM" id="CLU_048577_1_1_5"/>
<dbReference type="UniPathway" id="UPA00031">
    <property type="reaction ID" value="UER00009"/>
</dbReference>
<dbReference type="Proteomes" id="UP000001600">
    <property type="component" value="Chromosome 1"/>
</dbReference>
<dbReference type="GO" id="GO:0005737">
    <property type="term" value="C:cytoplasm"/>
    <property type="evidence" value="ECO:0007669"/>
    <property type="project" value="UniProtKB-SubCell"/>
</dbReference>
<dbReference type="GO" id="GO:0003949">
    <property type="term" value="F:1-(5-phosphoribosyl)-5-[(5-phosphoribosylamino)methylideneamino]imidazole-4-carboxamide isomerase activity"/>
    <property type="evidence" value="ECO:0007669"/>
    <property type="project" value="UniProtKB-UniRule"/>
</dbReference>
<dbReference type="GO" id="GO:0000105">
    <property type="term" value="P:L-histidine biosynthetic process"/>
    <property type="evidence" value="ECO:0007669"/>
    <property type="project" value="UniProtKB-UniRule"/>
</dbReference>
<dbReference type="GO" id="GO:0000162">
    <property type="term" value="P:L-tryptophan biosynthetic process"/>
    <property type="evidence" value="ECO:0007669"/>
    <property type="project" value="TreeGrafter"/>
</dbReference>
<dbReference type="CDD" id="cd04732">
    <property type="entry name" value="HisA"/>
    <property type="match status" value="1"/>
</dbReference>
<dbReference type="FunFam" id="3.20.20.70:FF:000009">
    <property type="entry name" value="1-(5-phosphoribosyl)-5-[(5-phosphoribosylamino)methylideneamino] imidazole-4-carboxamide isomerase"/>
    <property type="match status" value="1"/>
</dbReference>
<dbReference type="Gene3D" id="3.20.20.70">
    <property type="entry name" value="Aldolase class I"/>
    <property type="match status" value="1"/>
</dbReference>
<dbReference type="HAMAP" id="MF_01014">
    <property type="entry name" value="HisA"/>
    <property type="match status" value="1"/>
</dbReference>
<dbReference type="InterPro" id="IPR013785">
    <property type="entry name" value="Aldolase_TIM"/>
</dbReference>
<dbReference type="InterPro" id="IPR006062">
    <property type="entry name" value="His_biosynth"/>
</dbReference>
<dbReference type="InterPro" id="IPR006063">
    <property type="entry name" value="HisA_bact_arch"/>
</dbReference>
<dbReference type="InterPro" id="IPR044524">
    <property type="entry name" value="Isoase_HisA-like"/>
</dbReference>
<dbReference type="InterPro" id="IPR023016">
    <property type="entry name" value="Isoase_HisA-like_bact"/>
</dbReference>
<dbReference type="InterPro" id="IPR011060">
    <property type="entry name" value="RibuloseP-bd_barrel"/>
</dbReference>
<dbReference type="NCBIfam" id="TIGR00007">
    <property type="entry name" value="1-(5-phosphoribosyl)-5-[(5-phosphoribosylamino)methylideneamino]imidazole-4-carboxamide isomerase"/>
    <property type="match status" value="1"/>
</dbReference>
<dbReference type="PANTHER" id="PTHR43090">
    <property type="entry name" value="1-(5-PHOSPHORIBOSYL)-5-[(5-PHOSPHORIBOSYLAMINO)METHYLIDENEAMINO] IMIDAZOLE-4-CARBOXAMIDE ISOMERASE"/>
    <property type="match status" value="1"/>
</dbReference>
<dbReference type="PANTHER" id="PTHR43090:SF2">
    <property type="entry name" value="1-(5-PHOSPHORIBOSYL)-5-[(5-PHOSPHORIBOSYLAMINO)METHYLIDENEAMINO] IMIDAZOLE-4-CARBOXAMIDE ISOMERASE"/>
    <property type="match status" value="1"/>
</dbReference>
<dbReference type="Pfam" id="PF00977">
    <property type="entry name" value="His_biosynth"/>
    <property type="match status" value="1"/>
</dbReference>
<dbReference type="SUPFAM" id="SSF51366">
    <property type="entry name" value="Ribulose-phoshate binding barrel"/>
    <property type="match status" value="1"/>
</dbReference>
<protein>
    <recommendedName>
        <fullName evidence="1">1-(5-phosphoribosyl)-5-[(5-phosphoribosylamino)methylideneamino] imidazole-4-carboxamide isomerase</fullName>
        <ecNumber evidence="1">5.3.1.16</ecNumber>
    </recommendedName>
    <alternativeName>
        <fullName evidence="1">Phosphoribosylformimino-5-aminoimidazole carboxamide ribotide isomerase</fullName>
    </alternativeName>
</protein>
<accession>B9JG66</accession>
<keyword id="KW-0028">Amino-acid biosynthesis</keyword>
<keyword id="KW-0963">Cytoplasm</keyword>
<keyword id="KW-0368">Histidine biosynthesis</keyword>
<keyword id="KW-0413">Isomerase</keyword>
<gene>
    <name evidence="1" type="primary">hisA</name>
    <name type="ordered locus">Arad_0056</name>
</gene>
<comment type="catalytic activity">
    <reaction evidence="1">
        <text>1-(5-phospho-beta-D-ribosyl)-5-[(5-phospho-beta-D-ribosylamino)methylideneamino]imidazole-4-carboxamide = 5-[(5-phospho-1-deoxy-D-ribulos-1-ylimino)methylamino]-1-(5-phospho-beta-D-ribosyl)imidazole-4-carboxamide</text>
        <dbReference type="Rhea" id="RHEA:15469"/>
        <dbReference type="ChEBI" id="CHEBI:58435"/>
        <dbReference type="ChEBI" id="CHEBI:58525"/>
        <dbReference type="EC" id="5.3.1.16"/>
    </reaction>
</comment>
<comment type="pathway">
    <text evidence="1">Amino-acid biosynthesis; L-histidine biosynthesis; L-histidine from 5-phospho-alpha-D-ribose 1-diphosphate: step 4/9.</text>
</comment>
<comment type="subcellular location">
    <subcellularLocation>
        <location evidence="1">Cytoplasm</location>
    </subcellularLocation>
</comment>
<comment type="similarity">
    <text evidence="1">Belongs to the HisA/HisF family.</text>
</comment>
<feature type="chain" id="PRO_1000148945" description="1-(5-phosphoribosyl)-5-[(5-phosphoribosylamino)methylideneamino] imidazole-4-carboxamide isomerase">
    <location>
        <begin position="1"/>
        <end position="249"/>
    </location>
</feature>
<feature type="active site" description="Proton acceptor" evidence="1">
    <location>
        <position position="8"/>
    </location>
</feature>
<feature type="active site" description="Proton donor" evidence="1">
    <location>
        <position position="129"/>
    </location>
</feature>
<proteinExistence type="inferred from homology"/>
<sequence length="249" mass="26289">MILFPAIDLKDGQCVRLKLGDMNQATVYNPDPGAQAKAFEDQGFEWLHVVDLNGAFAGETVNGAAVDAILKATKNPVQLGGGIRTLDHIENWLARGLTRVILGTVAVRDPALVIEACKRFPGHVAVGIDAKGGKVAVEGWAEASELGIIELAKKFEGAGVAAIIYTDIDRDGILTGINWASTLELADAVSIPVIASGGLASMDDIRRMVEPDARKLEGAISGRALYDGRIDPQEALALIKAAKAKEIAQ</sequence>
<organism>
    <name type="scientific">Rhizobium rhizogenes (strain K84 / ATCC BAA-868)</name>
    <name type="common">Agrobacterium radiobacter</name>
    <dbReference type="NCBI Taxonomy" id="311403"/>
    <lineage>
        <taxon>Bacteria</taxon>
        <taxon>Pseudomonadati</taxon>
        <taxon>Pseudomonadota</taxon>
        <taxon>Alphaproteobacteria</taxon>
        <taxon>Hyphomicrobiales</taxon>
        <taxon>Rhizobiaceae</taxon>
        <taxon>Rhizobium/Agrobacterium group</taxon>
        <taxon>Rhizobium</taxon>
    </lineage>
</organism>
<reference key="1">
    <citation type="journal article" date="2009" name="J. Bacteriol.">
        <title>Genome sequences of three Agrobacterium biovars help elucidate the evolution of multichromosome genomes in bacteria.</title>
        <authorList>
            <person name="Slater S.C."/>
            <person name="Goldman B.S."/>
            <person name="Goodner B."/>
            <person name="Setubal J.C."/>
            <person name="Farrand S.K."/>
            <person name="Nester E.W."/>
            <person name="Burr T.J."/>
            <person name="Banta L."/>
            <person name="Dickerman A.W."/>
            <person name="Paulsen I."/>
            <person name="Otten L."/>
            <person name="Suen G."/>
            <person name="Welch R."/>
            <person name="Almeida N.F."/>
            <person name="Arnold F."/>
            <person name="Burton O.T."/>
            <person name="Du Z."/>
            <person name="Ewing A."/>
            <person name="Godsy E."/>
            <person name="Heisel S."/>
            <person name="Houmiel K.L."/>
            <person name="Jhaveri J."/>
            <person name="Lu J."/>
            <person name="Miller N.M."/>
            <person name="Norton S."/>
            <person name="Chen Q."/>
            <person name="Phoolcharoen W."/>
            <person name="Ohlin V."/>
            <person name="Ondrusek D."/>
            <person name="Pride N."/>
            <person name="Stricklin S.L."/>
            <person name="Sun J."/>
            <person name="Wheeler C."/>
            <person name="Wilson L."/>
            <person name="Zhu H."/>
            <person name="Wood D.W."/>
        </authorList>
    </citation>
    <scope>NUCLEOTIDE SEQUENCE [LARGE SCALE GENOMIC DNA]</scope>
    <source>
        <strain>K84 / ATCC BAA-868</strain>
    </source>
</reference>